<sequence>MDRVELCNAILFGELDVARRLLDSYINPNFTINGYSPIKMAVRLRDVEMIKLLMSYNTYPDYNYPDIESELHEAVEEGDVVKVEELLDSGKFINDVIYKKGNTPLHLATISKNLDMMRLLIARGADTDVPNTDRFTPLHLAVMSKDIKGIELLLDHRACTNIEDCYGCTPLIIAMSKGDTEVCRMLLDSGANIDYFSKRPCVTAMCYAIQNNKIDMVSMFLKRGADSNIVFTVMNEEHTTLEMICNMDTNPESESVDMLIADIALRQYTNTISSDKGFSRNMTVINSKSRLKDVFEKCKIELRRINSESIRTYNILDLCLKPSKNLDENILARHSRKILGLYDNAIFYKYLLKELADTASQRAEAIESAMRVIDEKITGDETKWNWLPHEIKYNILEYIGNKELDIASMK</sequence>
<organismHost>
    <name type="scientific">Vertebrata</name>
    <dbReference type="NCBI Taxonomy" id="7742"/>
</organismHost>
<keyword id="KW-0040">ANK repeat</keyword>
<keyword id="KW-0244">Early protein</keyword>
<keyword id="KW-1185">Reference proteome</keyword>
<keyword id="KW-0677">Repeat</keyword>
<name>V240_FOWPN</name>
<dbReference type="EMBL" id="D00295">
    <property type="protein sequence ID" value="BAA00199.1"/>
    <property type="molecule type" value="Genomic_DNA"/>
</dbReference>
<dbReference type="EMBL" id="AF198100">
    <property type="protein sequence ID" value="AAF44584.1"/>
    <property type="molecule type" value="Genomic_DNA"/>
</dbReference>
<dbReference type="PIR" id="G29963">
    <property type="entry name" value="WMVZF7"/>
</dbReference>
<dbReference type="RefSeq" id="NP_039203.1">
    <property type="nucleotide sequence ID" value="NC_002188.1"/>
</dbReference>
<dbReference type="SMR" id="P14360"/>
<dbReference type="GeneID" id="1486812"/>
<dbReference type="KEGG" id="vg:1486812"/>
<dbReference type="Proteomes" id="UP000008597">
    <property type="component" value="Segment"/>
</dbReference>
<dbReference type="Gene3D" id="1.25.40.20">
    <property type="entry name" value="Ankyrin repeat-containing domain"/>
    <property type="match status" value="2"/>
</dbReference>
<dbReference type="InterPro" id="IPR002110">
    <property type="entry name" value="Ankyrin_rpt"/>
</dbReference>
<dbReference type="InterPro" id="IPR036770">
    <property type="entry name" value="Ankyrin_rpt-contain_sf"/>
</dbReference>
<dbReference type="InterPro" id="IPR018272">
    <property type="entry name" value="PRANC_domain"/>
</dbReference>
<dbReference type="PANTHER" id="PTHR24203">
    <property type="entry name" value="ANKYRIN REPEAT FAMILY PROTEIN"/>
    <property type="match status" value="1"/>
</dbReference>
<dbReference type="PANTHER" id="PTHR24203:SF86">
    <property type="entry name" value="PROTEASOME 26S SUBUNIT, NON-ATPASE 10"/>
    <property type="match status" value="1"/>
</dbReference>
<dbReference type="Pfam" id="PF00023">
    <property type="entry name" value="Ank"/>
    <property type="match status" value="1"/>
</dbReference>
<dbReference type="Pfam" id="PF12796">
    <property type="entry name" value="Ank_2"/>
    <property type="match status" value="1"/>
</dbReference>
<dbReference type="Pfam" id="PF09372">
    <property type="entry name" value="PRANC"/>
    <property type="match status" value="1"/>
</dbReference>
<dbReference type="SMART" id="SM00248">
    <property type="entry name" value="ANK"/>
    <property type="match status" value="7"/>
</dbReference>
<dbReference type="SUPFAM" id="SSF48403">
    <property type="entry name" value="Ankyrin repeat"/>
    <property type="match status" value="1"/>
</dbReference>
<dbReference type="PROSITE" id="PS50297">
    <property type="entry name" value="ANK_REP_REGION"/>
    <property type="match status" value="1"/>
</dbReference>
<dbReference type="PROSITE" id="PS50088">
    <property type="entry name" value="ANK_REPEAT"/>
    <property type="match status" value="3"/>
</dbReference>
<organism>
    <name type="scientific">Fowlpox virus (strain NVSL)</name>
    <name type="common">FPV</name>
    <dbReference type="NCBI Taxonomy" id="928301"/>
    <lineage>
        <taxon>Viruses</taxon>
        <taxon>Varidnaviria</taxon>
        <taxon>Bamfordvirae</taxon>
        <taxon>Nucleocytoviricota</taxon>
        <taxon>Pokkesviricetes</taxon>
        <taxon>Chitovirales</taxon>
        <taxon>Poxviridae</taxon>
        <taxon>Chordopoxvirinae</taxon>
        <taxon>Avipoxvirus</taxon>
        <taxon>Fowlpox virus</taxon>
    </lineage>
</organism>
<feature type="chain" id="PRO_0000067126" description="Putative ankyrin repeat protein FPV240">
    <location>
        <begin position="1"/>
        <end position="410"/>
    </location>
</feature>
<feature type="repeat" description="ANK 1">
    <location>
        <begin position="33"/>
        <end position="62"/>
    </location>
</feature>
<feature type="repeat" description="ANK 2">
    <location>
        <begin position="66"/>
        <end position="95"/>
    </location>
</feature>
<feature type="repeat" description="ANK 3">
    <location>
        <begin position="100"/>
        <end position="129"/>
    </location>
</feature>
<feature type="repeat" description="ANK 4">
    <location>
        <begin position="133"/>
        <end position="162"/>
    </location>
</feature>
<feature type="repeat" description="ANK 5">
    <location>
        <begin position="166"/>
        <end position="195"/>
    </location>
</feature>
<feature type="repeat" description="ANK 6">
    <location>
        <begin position="200"/>
        <end position="229"/>
    </location>
</feature>
<reference key="1">
    <citation type="journal article" date="1988" name="J. Gen. Virol.">
        <title>Sequence analysis of an 11.2 kilobase, near-terminal, BamHI fragment of fowlpox virus.</title>
        <authorList>
            <person name="Tomley F."/>
            <person name="Binns M."/>
            <person name="Campbell J."/>
            <person name="Boursnell M.E.G."/>
        </authorList>
    </citation>
    <scope>NUCLEOTIDE SEQUENCE [GENOMIC DNA]</scope>
    <source>
        <strain>FP-9 / Isolate HP-438</strain>
    </source>
</reference>
<reference key="2">
    <citation type="journal article" date="2000" name="J. Virol.">
        <title>The genome of fowlpox virus.</title>
        <authorList>
            <person name="Afonso C.L."/>
            <person name="Tulman E.R."/>
            <person name="Lu Z."/>
            <person name="Zsak L."/>
            <person name="Kutish G.F."/>
            <person name="Rock D.L."/>
        </authorList>
    </citation>
    <scope>NUCLEOTIDE SEQUENCE [LARGE SCALE GENOMIC DNA]</scope>
</reference>
<proteinExistence type="predicted"/>
<accession>P14360</accession>
<gene>
    <name type="ordered locus">FPV240</name>
</gene>
<protein>
    <recommendedName>
        <fullName>Putative ankyrin repeat protein FPV240</fullName>
    </recommendedName>
    <alternativeName>
        <fullName>BamHI-ORF7</fullName>
    </alternativeName>
</protein>